<keyword id="KW-0027">Amidation</keyword>
<keyword id="KW-0165">Cleavage on pair of basic residues</keyword>
<keyword id="KW-1015">Disulfide bond</keyword>
<keyword id="KW-0964">Secreted</keyword>
<keyword id="KW-0732">Signal</keyword>
<keyword id="KW-0800">Toxin</keyword>
<reference key="1">
    <citation type="journal article" date="2004" name="Toxicon">
        <title>Novel conopeptides of the I-superfamily occur in several clades of cone snails.</title>
        <authorList>
            <person name="Kauferstein S."/>
            <person name="Huys I."/>
            <person name="Kuch U."/>
            <person name="Melaun C."/>
            <person name="Tytgat J."/>
            <person name="Mebs D."/>
        </authorList>
    </citation>
    <scope>NUCLEOTIDE SEQUENCE [MRNA]</scope>
    <source>
        <tissue>Venom duct</tissue>
    </source>
</reference>
<proteinExistence type="evidence at transcript level"/>
<protein>
    <recommendedName>
        <fullName>Conotoxin Im11.2</fullName>
    </recommendedName>
</protein>
<dbReference type="EMBL" id="AJ746185">
    <property type="protein sequence ID" value="CAG34093.1"/>
    <property type="molecule type" value="mRNA"/>
</dbReference>
<dbReference type="SMR" id="P69496"/>
<dbReference type="ConoServer" id="1394">
    <property type="toxin name" value="Im11.2 precursor"/>
</dbReference>
<dbReference type="GO" id="GO:0005576">
    <property type="term" value="C:extracellular region"/>
    <property type="evidence" value="ECO:0007669"/>
    <property type="project" value="UniProtKB-SubCell"/>
</dbReference>
<dbReference type="GO" id="GO:0090729">
    <property type="term" value="F:toxin activity"/>
    <property type="evidence" value="ECO:0007669"/>
    <property type="project" value="UniProtKB-KW"/>
</dbReference>
<dbReference type="InterPro" id="IPR013141">
    <property type="entry name" value="Conotoxin-I_CS"/>
</dbReference>
<dbReference type="InterPro" id="IPR020242">
    <property type="entry name" value="Conotoxin_I2"/>
</dbReference>
<dbReference type="Pfam" id="PF17557">
    <property type="entry name" value="Conotoxin_I2"/>
    <property type="match status" value="1"/>
</dbReference>
<dbReference type="PROSITE" id="PS60019">
    <property type="entry name" value="I_CONOTOXIN"/>
    <property type="match status" value="1"/>
</dbReference>
<name>I22_CONIM</name>
<feature type="signal peptide" evidence="3">
    <location>
        <begin position="1"/>
        <end position="26"/>
    </location>
</feature>
<feature type="chain" id="PRO_0000035092" description="Conotoxin Im11.2">
    <location>
        <begin position="27"/>
        <end position="57"/>
    </location>
</feature>
<feature type="propeptide" id="PRO_0000035093" evidence="1">
    <location>
        <begin position="61"/>
        <end position="64"/>
    </location>
</feature>
<feature type="modified residue" description="Aspartic acid 1-amide" evidence="1">
    <location>
        <position position="57"/>
    </location>
</feature>
<feature type="disulfide bond" evidence="2">
    <location>
        <begin position="27"/>
        <end position="41"/>
    </location>
</feature>
<feature type="disulfide bond" evidence="2">
    <location>
        <begin position="34"/>
        <end position="46"/>
    </location>
</feature>
<feature type="disulfide bond" evidence="2">
    <location>
        <begin position="40"/>
        <end position="50"/>
    </location>
</feature>
<feature type="disulfide bond" evidence="2">
    <location>
        <begin position="45"/>
        <end position="54"/>
    </location>
</feature>
<accession>P69496</accession>
<accession>Q59AA8</accession>
<organism>
    <name type="scientific">Conus imperialis</name>
    <name type="common">Imperial cone</name>
    <dbReference type="NCBI Taxonomy" id="35631"/>
    <lineage>
        <taxon>Eukaryota</taxon>
        <taxon>Metazoa</taxon>
        <taxon>Spiralia</taxon>
        <taxon>Lophotrochozoa</taxon>
        <taxon>Mollusca</taxon>
        <taxon>Gastropoda</taxon>
        <taxon>Caenogastropoda</taxon>
        <taxon>Neogastropoda</taxon>
        <taxon>Conoidea</taxon>
        <taxon>Conidae</taxon>
        <taxon>Conus</taxon>
        <taxon>Stephanoconus</taxon>
    </lineage>
</organism>
<evidence type="ECO:0000250" key="1"/>
<evidence type="ECO:0000250" key="2">
    <source>
        <dbReference type="UniProtKB" id="Q7Z094"/>
    </source>
</evidence>
<evidence type="ECO:0000255" key="3"/>
<evidence type="ECO:0000305" key="4"/>
<sequence>MMFRLTSVSCFLLVIVCLNLVVLTNACRLEGSSCRRSYQCCHKSCCIRECKFPCRWDGKRATFQ</sequence>
<comment type="subcellular location">
    <subcellularLocation>
        <location evidence="1">Secreted</location>
    </subcellularLocation>
</comment>
<comment type="tissue specificity">
    <text>Expressed by the venom duct.</text>
</comment>
<comment type="domain">
    <text>The cysteine framework is XI (C-C-CC-CC-C-C).</text>
</comment>
<comment type="similarity">
    <text evidence="4">Belongs to the conotoxin I2 superfamily.</text>
</comment>